<comment type="function">
    <text evidence="1">Participates actively in the response to hyperosmotic and heat shock by preventing the aggregation of stress-denatured proteins, in association with DnaK and GrpE. It is the nucleotide exchange factor for DnaK and may function as a thermosensor. Unfolded proteins bind initially to DnaJ; upon interaction with the DnaJ-bound protein, DnaK hydrolyzes its bound ATP, resulting in the formation of a stable complex. GrpE releases ADP from DnaK; ATP binding to DnaK triggers the release of the substrate protein, thus completing the reaction cycle. Several rounds of ATP-dependent interactions between DnaJ, DnaK and GrpE are required for fully efficient folding (By similarity).</text>
</comment>
<comment type="subunit">
    <text evidence="1">Homodimer.</text>
</comment>
<comment type="subcellular location">
    <subcellularLocation>
        <location evidence="1">Cytoplasm</location>
    </subcellularLocation>
</comment>
<comment type="similarity">
    <text evidence="2">Belongs to the GrpE family.</text>
</comment>
<comment type="sequence caution" evidence="2">
    <conflict type="erroneous initiation">
        <sequence resource="EMBL-CDS" id="CAC13316"/>
    </conflict>
</comment>
<protein>
    <recommendedName>
        <fullName>Protein GrpE</fullName>
    </recommendedName>
    <alternativeName>
        <fullName>HSP-70 cofactor</fullName>
    </alternativeName>
</protein>
<dbReference type="EMBL" id="AL445563">
    <property type="protein sequence ID" value="CAC13316.1"/>
    <property type="status" value="ALT_INIT"/>
    <property type="molecule type" value="Genomic_DNA"/>
</dbReference>
<dbReference type="PIR" id="G90529">
    <property type="entry name" value="G90529"/>
</dbReference>
<dbReference type="SMR" id="Q98R67"/>
<dbReference type="STRING" id="272635.gene:17576727"/>
<dbReference type="KEGG" id="mpu:MYPU_1430"/>
<dbReference type="eggNOG" id="COG0576">
    <property type="taxonomic scope" value="Bacteria"/>
</dbReference>
<dbReference type="HOGENOM" id="CLU_070790_0_0_14"/>
<dbReference type="Proteomes" id="UP000000528">
    <property type="component" value="Chromosome"/>
</dbReference>
<dbReference type="GO" id="GO:0005737">
    <property type="term" value="C:cytoplasm"/>
    <property type="evidence" value="ECO:0007669"/>
    <property type="project" value="UniProtKB-SubCell"/>
</dbReference>
<dbReference type="GO" id="GO:0003755">
    <property type="term" value="F:peptidyl-prolyl cis-trans isomerase activity"/>
    <property type="evidence" value="ECO:0007669"/>
    <property type="project" value="InterPro"/>
</dbReference>
<dbReference type="Gene3D" id="3.10.50.40">
    <property type="match status" value="1"/>
</dbReference>
<dbReference type="InterPro" id="IPR013805">
    <property type="entry name" value="GrpE_coiled_coil"/>
</dbReference>
<dbReference type="InterPro" id="IPR046357">
    <property type="entry name" value="PPIase_dom_sf"/>
</dbReference>
<dbReference type="SUPFAM" id="SSF58014">
    <property type="entry name" value="Coiled-coil domain of nucleotide exchange factor GrpE"/>
    <property type="match status" value="1"/>
</dbReference>
<dbReference type="SUPFAM" id="SSF54534">
    <property type="entry name" value="FKBP-like"/>
    <property type="match status" value="1"/>
</dbReference>
<evidence type="ECO:0000250" key="1"/>
<evidence type="ECO:0000305" key="2"/>
<sequence length="194" mass="22621">MKNKILVKNNELTVDISAFDDKDEVLSLQRKNFNLILGKDSFLRGFDANLIGQKSLPLYEFSMVIPSDFKDEKLRGKTLDFKVHNKAKIKVNSETNLDKEKIKSLEKELANQKEKNALLLLDNVKLKSEKEKIIKDFKDEIKTFENRAREKIAEKLNLEKQLLENKFEDFKKYGSQKIFESIMPIIQNLLVAIE</sequence>
<accession>Q98R67</accession>
<proteinExistence type="inferred from homology"/>
<organism>
    <name type="scientific">Mycoplasmopsis pulmonis (strain UAB CTIP)</name>
    <name type="common">Mycoplasma pulmonis</name>
    <dbReference type="NCBI Taxonomy" id="272635"/>
    <lineage>
        <taxon>Bacteria</taxon>
        <taxon>Bacillati</taxon>
        <taxon>Mycoplasmatota</taxon>
        <taxon>Mycoplasmoidales</taxon>
        <taxon>Metamycoplasmataceae</taxon>
        <taxon>Mycoplasmopsis</taxon>
    </lineage>
</organism>
<keyword id="KW-0143">Chaperone</keyword>
<keyword id="KW-0963">Cytoplasm</keyword>
<keyword id="KW-1185">Reference proteome</keyword>
<keyword id="KW-0346">Stress response</keyword>
<feature type="chain" id="PRO_0000113822" description="Protein GrpE">
    <location>
        <begin position="1"/>
        <end position="194"/>
    </location>
</feature>
<reference key="1">
    <citation type="journal article" date="2001" name="Nucleic Acids Res.">
        <title>The complete genome sequence of the murine respiratory pathogen Mycoplasma pulmonis.</title>
        <authorList>
            <person name="Chambaud I."/>
            <person name="Heilig R."/>
            <person name="Ferris S."/>
            <person name="Barbe V."/>
            <person name="Samson D."/>
            <person name="Galisson F."/>
            <person name="Moszer I."/>
            <person name="Dybvig K."/>
            <person name="Wroblewski H."/>
            <person name="Viari A."/>
            <person name="Rocha E.P.C."/>
            <person name="Blanchard A."/>
        </authorList>
    </citation>
    <scope>NUCLEOTIDE SEQUENCE [LARGE SCALE GENOMIC DNA]</scope>
    <source>
        <strain>UAB CTIP</strain>
    </source>
</reference>
<name>GRPE_MYCPU</name>
<gene>
    <name type="primary">grpE</name>
    <name type="ordered locus">MYPU_1430</name>
</gene>